<keyword id="KW-0903">Direct protein sequencing</keyword>
<keyword id="KW-1015">Disulfide bond</keyword>
<keyword id="KW-0646">Protease inhibitor</keyword>
<keyword id="KW-0964">Secreted</keyword>
<keyword id="KW-0732">Signal</keyword>
<keyword id="KW-0789">Thiol protease inhibitor</keyword>
<organism>
    <name type="scientific">Oncorhynchus keta</name>
    <name type="common">Chum salmon</name>
    <name type="synonym">Salmo keta</name>
    <dbReference type="NCBI Taxonomy" id="8018"/>
    <lineage>
        <taxon>Eukaryota</taxon>
        <taxon>Metazoa</taxon>
        <taxon>Chordata</taxon>
        <taxon>Craniata</taxon>
        <taxon>Vertebrata</taxon>
        <taxon>Euteleostomi</taxon>
        <taxon>Actinopterygii</taxon>
        <taxon>Neopterygii</taxon>
        <taxon>Teleostei</taxon>
        <taxon>Protacanthopterygii</taxon>
        <taxon>Salmoniformes</taxon>
        <taxon>Salmonidae</taxon>
        <taxon>Salmoninae</taxon>
        <taxon>Oncorhynchus</taxon>
    </lineage>
</organism>
<evidence type="ECO:0000250" key="1">
    <source>
        <dbReference type="UniProtKB" id="P04080"/>
    </source>
</evidence>
<evidence type="ECO:0000269" key="2">
    <source>
    </source>
</evidence>
<evidence type="ECO:0000269" key="3">
    <source>
    </source>
</evidence>
<evidence type="ECO:0000303" key="4">
    <source>
    </source>
</evidence>
<evidence type="ECO:0000303" key="5">
    <source>
    </source>
</evidence>
<evidence type="ECO:0000305" key="6"/>
<dbReference type="EMBL" id="D86628">
    <property type="protein sequence ID" value="BAA13149.1"/>
    <property type="status" value="ALT_INIT"/>
    <property type="molecule type" value="mRNA"/>
</dbReference>
<dbReference type="PIR" id="JC2040">
    <property type="entry name" value="JC2040"/>
</dbReference>
<dbReference type="SMR" id="Q98967"/>
<dbReference type="MEROPS" id="I25.041"/>
<dbReference type="GO" id="GO:0005737">
    <property type="term" value="C:cytoplasm"/>
    <property type="evidence" value="ECO:0007669"/>
    <property type="project" value="TreeGrafter"/>
</dbReference>
<dbReference type="GO" id="GO:0005576">
    <property type="term" value="C:extracellular region"/>
    <property type="evidence" value="ECO:0000314"/>
    <property type="project" value="UniProtKB"/>
</dbReference>
<dbReference type="GO" id="GO:0005615">
    <property type="term" value="C:extracellular space"/>
    <property type="evidence" value="ECO:0007669"/>
    <property type="project" value="TreeGrafter"/>
</dbReference>
<dbReference type="GO" id="GO:0031982">
    <property type="term" value="C:vesicle"/>
    <property type="evidence" value="ECO:0007669"/>
    <property type="project" value="TreeGrafter"/>
</dbReference>
<dbReference type="GO" id="GO:0004869">
    <property type="term" value="F:cysteine-type endopeptidase inhibitor activity"/>
    <property type="evidence" value="ECO:0007669"/>
    <property type="project" value="UniProtKB-KW"/>
</dbReference>
<dbReference type="GO" id="GO:0030414">
    <property type="term" value="F:peptidase inhibitor activity"/>
    <property type="evidence" value="ECO:0000250"/>
    <property type="project" value="AgBase"/>
</dbReference>
<dbReference type="CDD" id="cd00042">
    <property type="entry name" value="CY"/>
    <property type="match status" value="1"/>
</dbReference>
<dbReference type="FunFam" id="3.10.450.10:FF:000004">
    <property type="entry name" value="Cystatin C"/>
    <property type="match status" value="1"/>
</dbReference>
<dbReference type="Gene3D" id="3.10.450.10">
    <property type="match status" value="1"/>
</dbReference>
<dbReference type="InterPro" id="IPR000010">
    <property type="entry name" value="Cystatin_dom"/>
</dbReference>
<dbReference type="InterPro" id="IPR046350">
    <property type="entry name" value="Cystatin_sf"/>
</dbReference>
<dbReference type="InterPro" id="IPR018073">
    <property type="entry name" value="Prot_inh_cystat_CS"/>
</dbReference>
<dbReference type="PANTHER" id="PTHR46186">
    <property type="entry name" value="CYSTATIN"/>
    <property type="match status" value="1"/>
</dbReference>
<dbReference type="PANTHER" id="PTHR46186:SF12">
    <property type="entry name" value="CYSTATIN C (AMYLOID ANGIOPATHY AND CEREBRAL HEMORRHAGE)-RELATED"/>
    <property type="match status" value="1"/>
</dbReference>
<dbReference type="Pfam" id="PF00031">
    <property type="entry name" value="Cystatin"/>
    <property type="match status" value="1"/>
</dbReference>
<dbReference type="SMART" id="SM00043">
    <property type="entry name" value="CY"/>
    <property type="match status" value="1"/>
</dbReference>
<dbReference type="SUPFAM" id="SSF54403">
    <property type="entry name" value="Cystatin/monellin"/>
    <property type="match status" value="1"/>
</dbReference>
<dbReference type="PROSITE" id="PS00287">
    <property type="entry name" value="CYSTATIN"/>
    <property type="match status" value="1"/>
</dbReference>
<proteinExistence type="evidence at protein level"/>
<accession>Q98967</accession>
<name>CYT_ONCKE</name>
<sequence length="130" mass="14566">MEWKIVVPLLAVAFTVANAGLVGGPMDANMNDQGTRDALQFAVVEHNKKTNDMFVRQVAKVVNAQKQVVSGMKYIFTVQMGRTPCRKGGVEKICSVHKDPQMAVPYKCTFEVWSRPWMSDIQMVKNQCES</sequence>
<comment type="function">
    <text evidence="2">Cysteine proteinase inhibitor.</text>
</comment>
<comment type="subcellular location">
    <subcellularLocation>
        <location evidence="3">Secreted</location>
    </subcellularLocation>
</comment>
<comment type="tissue specificity">
    <text evidence="3">Ubiquitous expression including brain, white muscle, heart, gill, kidney, spleen, liver and skin with the highest and lowest level in brain and gill, respectively.</text>
</comment>
<comment type="similarity">
    <text evidence="6">Belongs to the cystatin family.</text>
</comment>
<comment type="sequence caution" evidence="6">
    <conflict type="erroneous initiation">
        <sequence resource="EMBL-CDS" id="BAA13149"/>
    </conflict>
    <text>Extended N-terminus.</text>
</comment>
<protein>
    <recommendedName>
        <fullName evidence="4">Cystatin</fullName>
    </recommendedName>
</protein>
<reference key="1">
    <citation type="journal article" date="1996" name="J. Biochem.">
        <title>Molecular cloning and gene expression of chum salmon cystatin.</title>
        <authorList>
            <person name="Yamashita M."/>
            <person name="Konagaya S."/>
        </authorList>
    </citation>
    <scope>NUCLEOTIDE SEQUENCE [MRNA]</scope>
    <scope>SYNTHETIC PEPTIDE 20-35</scope>
    <scope>SUBCELLULAR LOCATION</scope>
    <scope>TISSUE SPECIFICITY</scope>
    <source>
        <tissue evidence="5">Liver</tissue>
    </source>
</reference>
<reference key="2">
    <citation type="journal article" date="1994" name="Biosci. Biotechnol. Biochem.">
        <title>The complete amino acid sequence of pituitary cystatin from chum salmon.</title>
        <authorList>
            <person name="Koide Y."/>
            <person name="Noso T."/>
        </authorList>
    </citation>
    <scope>PROTEIN SEQUENCE OF 20-130</scope>
    <scope>FUNCTION</scope>
    <scope>DISULFIDE BONDS</scope>
    <source>
        <tissue evidence="4">Pituitary</tissue>
    </source>
</reference>
<feature type="signal peptide" evidence="2">
    <location>
        <begin position="1"/>
        <end position="19"/>
    </location>
</feature>
<feature type="chain" id="PRO_0000006665" description="Cystatin">
    <location>
        <begin position="20"/>
        <end position="130"/>
    </location>
</feature>
<feature type="short sequence motif" description="Secondary area of contact" evidence="1">
    <location>
        <begin position="67"/>
        <end position="71"/>
    </location>
</feature>
<feature type="site" description="Reactive site" evidence="1">
    <location>
        <position position="23"/>
    </location>
</feature>
<feature type="disulfide bond" evidence="2">
    <location>
        <begin position="85"/>
        <end position="94"/>
    </location>
</feature>
<feature type="disulfide bond" evidence="2">
    <location>
        <begin position="108"/>
        <end position="128"/>
    </location>
</feature>
<feature type="sequence conflict" description="In Ref. 2; AA sequence." evidence="6" ref="2">
    <original>V</original>
    <variation>I</variation>
    <location>
        <position position="22"/>
    </location>
</feature>
<feature type="sequence conflict" description="In Ref. 2; AA sequence." evidence="6" ref="2">
    <original>R</original>
    <variation>I</variation>
    <location>
        <position position="115"/>
    </location>
</feature>
<feature type="sequence conflict" description="In Ref. 2; AA sequence." evidence="6" ref="2">
    <original>D</original>
    <variation>G</variation>
    <location>
        <position position="120"/>
    </location>
</feature>
<feature type="sequence conflict" description="In Ref. 2; AA sequence." evidence="6" ref="2">
    <original>Q</original>
    <variation>K</variation>
    <location>
        <position position="122"/>
    </location>
</feature>